<reference key="1">
    <citation type="journal article" date="2003" name="Proc. Natl. Acad. Sci. U.S.A.">
        <title>Complete genome sequence and analysis of Wolinella succinogenes.</title>
        <authorList>
            <person name="Baar C."/>
            <person name="Eppinger M."/>
            <person name="Raddatz G."/>
            <person name="Simon J."/>
            <person name="Lanz C."/>
            <person name="Klimmek O."/>
            <person name="Nandakumar R."/>
            <person name="Gross R."/>
            <person name="Rosinus A."/>
            <person name="Keller H."/>
            <person name="Jagtap P."/>
            <person name="Linke B."/>
            <person name="Meyer F."/>
            <person name="Lederer H."/>
            <person name="Schuster S.C."/>
        </authorList>
    </citation>
    <scope>NUCLEOTIDE SEQUENCE [LARGE SCALE GENOMIC DNA]</scope>
    <source>
        <strain>ATCC 29543 / DSM 1740 / CCUG 13145 / JCM 31913 / LMG 7466 / NCTC 11488 / FDC 602W</strain>
    </source>
</reference>
<dbReference type="EC" id="7.1.1.-" evidence="1"/>
<dbReference type="EMBL" id="BX571658">
    <property type="protein sequence ID" value="CAE09613.1"/>
    <property type="molecule type" value="Genomic_DNA"/>
</dbReference>
<dbReference type="RefSeq" id="WP_011138413.1">
    <property type="nucleotide sequence ID" value="NC_005090.1"/>
</dbReference>
<dbReference type="SMR" id="Q7MA50"/>
<dbReference type="STRING" id="273121.WS0473"/>
<dbReference type="KEGG" id="wsu:WS0473"/>
<dbReference type="eggNOG" id="COG0377">
    <property type="taxonomic scope" value="Bacteria"/>
</dbReference>
<dbReference type="HOGENOM" id="CLU_055737_7_3_7"/>
<dbReference type="Proteomes" id="UP000000422">
    <property type="component" value="Chromosome"/>
</dbReference>
<dbReference type="GO" id="GO:0005886">
    <property type="term" value="C:plasma membrane"/>
    <property type="evidence" value="ECO:0007669"/>
    <property type="project" value="UniProtKB-SubCell"/>
</dbReference>
<dbReference type="GO" id="GO:0045271">
    <property type="term" value="C:respiratory chain complex I"/>
    <property type="evidence" value="ECO:0007669"/>
    <property type="project" value="TreeGrafter"/>
</dbReference>
<dbReference type="GO" id="GO:0051539">
    <property type="term" value="F:4 iron, 4 sulfur cluster binding"/>
    <property type="evidence" value="ECO:0007669"/>
    <property type="project" value="UniProtKB-KW"/>
</dbReference>
<dbReference type="GO" id="GO:0005506">
    <property type="term" value="F:iron ion binding"/>
    <property type="evidence" value="ECO:0007669"/>
    <property type="project" value="UniProtKB-UniRule"/>
</dbReference>
<dbReference type="GO" id="GO:0008137">
    <property type="term" value="F:NADH dehydrogenase (ubiquinone) activity"/>
    <property type="evidence" value="ECO:0007669"/>
    <property type="project" value="InterPro"/>
</dbReference>
<dbReference type="GO" id="GO:0050136">
    <property type="term" value="F:NADH:ubiquinone reductase (non-electrogenic) activity"/>
    <property type="evidence" value="ECO:0007669"/>
    <property type="project" value="UniProtKB-UniRule"/>
</dbReference>
<dbReference type="GO" id="GO:0048038">
    <property type="term" value="F:quinone binding"/>
    <property type="evidence" value="ECO:0007669"/>
    <property type="project" value="UniProtKB-KW"/>
</dbReference>
<dbReference type="GO" id="GO:0009060">
    <property type="term" value="P:aerobic respiration"/>
    <property type="evidence" value="ECO:0007669"/>
    <property type="project" value="TreeGrafter"/>
</dbReference>
<dbReference type="GO" id="GO:0015990">
    <property type="term" value="P:electron transport coupled proton transport"/>
    <property type="evidence" value="ECO:0007669"/>
    <property type="project" value="TreeGrafter"/>
</dbReference>
<dbReference type="FunFam" id="3.40.50.12280:FF:000002">
    <property type="entry name" value="NADH-quinone oxidoreductase subunit B"/>
    <property type="match status" value="1"/>
</dbReference>
<dbReference type="Gene3D" id="3.40.50.12280">
    <property type="match status" value="1"/>
</dbReference>
<dbReference type="HAMAP" id="MF_01356">
    <property type="entry name" value="NDH1_NuoB"/>
    <property type="match status" value="1"/>
</dbReference>
<dbReference type="InterPro" id="IPR006137">
    <property type="entry name" value="NADH_UbQ_OxRdtase-like_20kDa"/>
</dbReference>
<dbReference type="InterPro" id="IPR006138">
    <property type="entry name" value="NADH_UQ_OxRdtase_20Kd_su"/>
</dbReference>
<dbReference type="NCBIfam" id="TIGR01957">
    <property type="entry name" value="nuoB_fam"/>
    <property type="match status" value="1"/>
</dbReference>
<dbReference type="NCBIfam" id="NF005012">
    <property type="entry name" value="PRK06411.1"/>
    <property type="match status" value="1"/>
</dbReference>
<dbReference type="PANTHER" id="PTHR11995">
    <property type="entry name" value="NADH DEHYDROGENASE"/>
    <property type="match status" value="1"/>
</dbReference>
<dbReference type="PANTHER" id="PTHR11995:SF14">
    <property type="entry name" value="NADH DEHYDROGENASE [UBIQUINONE] IRON-SULFUR PROTEIN 7, MITOCHONDRIAL"/>
    <property type="match status" value="1"/>
</dbReference>
<dbReference type="Pfam" id="PF01058">
    <property type="entry name" value="Oxidored_q6"/>
    <property type="match status" value="1"/>
</dbReference>
<dbReference type="SUPFAM" id="SSF56770">
    <property type="entry name" value="HydA/Nqo6-like"/>
    <property type="match status" value="1"/>
</dbReference>
<feature type="chain" id="PRO_0000376400" description="NADH-quinone oxidoreductase subunit B">
    <location>
        <begin position="1"/>
        <end position="169"/>
    </location>
</feature>
<feature type="binding site" evidence="1">
    <location>
        <position position="42"/>
    </location>
    <ligand>
        <name>[4Fe-4S] cluster</name>
        <dbReference type="ChEBI" id="CHEBI:49883"/>
    </ligand>
</feature>
<feature type="binding site" evidence="1">
    <location>
        <position position="43"/>
    </location>
    <ligand>
        <name>[4Fe-4S] cluster</name>
        <dbReference type="ChEBI" id="CHEBI:49883"/>
    </ligand>
</feature>
<feature type="binding site" evidence="1">
    <location>
        <position position="107"/>
    </location>
    <ligand>
        <name>[4Fe-4S] cluster</name>
        <dbReference type="ChEBI" id="CHEBI:49883"/>
    </ligand>
</feature>
<feature type="binding site" evidence="1">
    <location>
        <position position="136"/>
    </location>
    <ligand>
        <name>[4Fe-4S] cluster</name>
        <dbReference type="ChEBI" id="CHEBI:49883"/>
    </ligand>
</feature>
<keyword id="KW-0004">4Fe-4S</keyword>
<keyword id="KW-0997">Cell inner membrane</keyword>
<keyword id="KW-1003">Cell membrane</keyword>
<keyword id="KW-0408">Iron</keyword>
<keyword id="KW-0411">Iron-sulfur</keyword>
<keyword id="KW-0472">Membrane</keyword>
<keyword id="KW-0479">Metal-binding</keyword>
<keyword id="KW-0520">NAD</keyword>
<keyword id="KW-0874">Quinone</keyword>
<keyword id="KW-1185">Reference proteome</keyword>
<keyword id="KW-1278">Translocase</keyword>
<keyword id="KW-0813">Transport</keyword>
<keyword id="KW-0830">Ubiquinone</keyword>
<sequence>MAQHEVNYLKSGGLPVVLTTVDHLVNWGRSNSLWALTYGLACCAIEMMASGAGRYDFDRFGTIFRASPRQADVMIVAGTLTKKHAEFIRRLYDQMSEPKWVISMGSCANTGGMFNTYATVQGCDRIIPVDVYLPGCAPRPETLQYAVMVLQQKIRREKASRKLPPKRLV</sequence>
<evidence type="ECO:0000255" key="1">
    <source>
        <dbReference type="HAMAP-Rule" id="MF_01356"/>
    </source>
</evidence>
<gene>
    <name evidence="1" type="primary">nuoB</name>
    <name type="ordered locus">WS0473</name>
</gene>
<comment type="function">
    <text evidence="1">NDH-1 shuttles electrons from NADH, via FMN and iron-sulfur (Fe-S) centers, to quinones in the respiratory chain. The immediate electron acceptor for the enzyme in this species is believed to be ubiquinone. Couples the redox reaction to proton translocation (for every two electrons transferred, four hydrogen ions are translocated across the cytoplasmic membrane), and thus conserves the redox energy in a proton gradient.</text>
</comment>
<comment type="catalytic activity">
    <reaction evidence="1">
        <text>a quinone + NADH + 5 H(+)(in) = a quinol + NAD(+) + 4 H(+)(out)</text>
        <dbReference type="Rhea" id="RHEA:57888"/>
        <dbReference type="ChEBI" id="CHEBI:15378"/>
        <dbReference type="ChEBI" id="CHEBI:24646"/>
        <dbReference type="ChEBI" id="CHEBI:57540"/>
        <dbReference type="ChEBI" id="CHEBI:57945"/>
        <dbReference type="ChEBI" id="CHEBI:132124"/>
    </reaction>
</comment>
<comment type="cofactor">
    <cofactor evidence="1">
        <name>[4Fe-4S] cluster</name>
        <dbReference type="ChEBI" id="CHEBI:49883"/>
    </cofactor>
    <text evidence="1">Binds 1 [4Fe-4S] cluster.</text>
</comment>
<comment type="subunit">
    <text evidence="1">NDH-1 is composed of 14 different subunits. Subunits NuoB, C, D, E, F, and G constitute the peripheral sector of the complex.</text>
</comment>
<comment type="subcellular location">
    <subcellularLocation>
        <location evidence="1">Cell inner membrane</location>
        <topology evidence="1">Peripheral membrane protein</topology>
        <orientation evidence="1">Cytoplasmic side</orientation>
    </subcellularLocation>
</comment>
<comment type="similarity">
    <text evidence="1">Belongs to the complex I 20 kDa subunit family.</text>
</comment>
<name>NUOB_WOLSU</name>
<accession>Q7MA50</accession>
<organism>
    <name type="scientific">Wolinella succinogenes (strain ATCC 29543 / DSM 1740 / CCUG 13145 / JCM 31913 / LMG 7466 / NCTC 11488 / FDC 602W)</name>
    <name type="common">Vibrio succinogenes</name>
    <dbReference type="NCBI Taxonomy" id="273121"/>
    <lineage>
        <taxon>Bacteria</taxon>
        <taxon>Pseudomonadati</taxon>
        <taxon>Campylobacterota</taxon>
        <taxon>Epsilonproteobacteria</taxon>
        <taxon>Campylobacterales</taxon>
        <taxon>Helicobacteraceae</taxon>
        <taxon>Wolinella</taxon>
    </lineage>
</organism>
<protein>
    <recommendedName>
        <fullName evidence="1">NADH-quinone oxidoreductase subunit B</fullName>
        <ecNumber evidence="1">7.1.1.-</ecNumber>
    </recommendedName>
    <alternativeName>
        <fullName evidence="1">NADH dehydrogenase I subunit B</fullName>
    </alternativeName>
    <alternativeName>
        <fullName evidence="1">NDH-1 subunit B</fullName>
    </alternativeName>
</protein>
<proteinExistence type="inferred from homology"/>